<reference key="1">
    <citation type="journal article" date="1996" name="J. Neurosci.">
        <title>Cloning and functional expression of a Drosophila metabotropic glutamate receptor expressed in the embryonic CNS.</title>
        <authorList>
            <person name="Parmentier M.L."/>
            <person name="Pin J.P."/>
            <person name="Bockaert J."/>
            <person name="Grau Y."/>
        </authorList>
    </citation>
    <scope>NUCLEOTIDE SEQUENCE [MRNA]</scope>
    <scope>FUNCTION</scope>
    <scope>SUBCELLULAR LOCATION</scope>
    <scope>DEVELOPMENTAL STAGE</scope>
    <source>
        <strain>Oregon-R</strain>
        <tissue>Head</tissue>
    </source>
</reference>
<reference key="2">
    <citation type="journal article" date="2000" name="Science">
        <title>The genome sequence of Drosophila melanogaster.</title>
        <authorList>
            <person name="Adams M.D."/>
            <person name="Celniker S.E."/>
            <person name="Holt R.A."/>
            <person name="Evans C.A."/>
            <person name="Gocayne J.D."/>
            <person name="Amanatides P.G."/>
            <person name="Scherer S.E."/>
            <person name="Li P.W."/>
            <person name="Hoskins R.A."/>
            <person name="Galle R.F."/>
            <person name="George R.A."/>
            <person name="Lewis S.E."/>
            <person name="Richards S."/>
            <person name="Ashburner M."/>
            <person name="Henderson S.N."/>
            <person name="Sutton G.G."/>
            <person name="Wortman J.R."/>
            <person name="Yandell M.D."/>
            <person name="Zhang Q."/>
            <person name="Chen L.X."/>
            <person name="Brandon R.C."/>
            <person name="Rogers Y.-H.C."/>
            <person name="Blazej R.G."/>
            <person name="Champe M."/>
            <person name="Pfeiffer B.D."/>
            <person name="Wan K.H."/>
            <person name="Doyle C."/>
            <person name="Baxter E.G."/>
            <person name="Helt G."/>
            <person name="Nelson C.R."/>
            <person name="Miklos G.L.G."/>
            <person name="Abril J.F."/>
            <person name="Agbayani A."/>
            <person name="An H.-J."/>
            <person name="Andrews-Pfannkoch C."/>
            <person name="Baldwin D."/>
            <person name="Ballew R.M."/>
            <person name="Basu A."/>
            <person name="Baxendale J."/>
            <person name="Bayraktaroglu L."/>
            <person name="Beasley E.M."/>
            <person name="Beeson K.Y."/>
            <person name="Benos P.V."/>
            <person name="Berman B.P."/>
            <person name="Bhandari D."/>
            <person name="Bolshakov S."/>
            <person name="Borkova D."/>
            <person name="Botchan M.R."/>
            <person name="Bouck J."/>
            <person name="Brokstein P."/>
            <person name="Brottier P."/>
            <person name="Burtis K.C."/>
            <person name="Busam D.A."/>
            <person name="Butler H."/>
            <person name="Cadieu E."/>
            <person name="Center A."/>
            <person name="Chandra I."/>
            <person name="Cherry J.M."/>
            <person name="Cawley S."/>
            <person name="Dahlke C."/>
            <person name="Davenport L.B."/>
            <person name="Davies P."/>
            <person name="de Pablos B."/>
            <person name="Delcher A."/>
            <person name="Deng Z."/>
            <person name="Mays A.D."/>
            <person name="Dew I."/>
            <person name="Dietz S.M."/>
            <person name="Dodson K."/>
            <person name="Doup L.E."/>
            <person name="Downes M."/>
            <person name="Dugan-Rocha S."/>
            <person name="Dunkov B.C."/>
            <person name="Dunn P."/>
            <person name="Durbin K.J."/>
            <person name="Evangelista C.C."/>
            <person name="Ferraz C."/>
            <person name="Ferriera S."/>
            <person name="Fleischmann W."/>
            <person name="Fosler C."/>
            <person name="Gabrielian A.E."/>
            <person name="Garg N.S."/>
            <person name="Gelbart W.M."/>
            <person name="Glasser K."/>
            <person name="Glodek A."/>
            <person name="Gong F."/>
            <person name="Gorrell J.H."/>
            <person name="Gu Z."/>
            <person name="Guan P."/>
            <person name="Harris M."/>
            <person name="Harris N.L."/>
            <person name="Harvey D.A."/>
            <person name="Heiman T.J."/>
            <person name="Hernandez J.R."/>
            <person name="Houck J."/>
            <person name="Hostin D."/>
            <person name="Houston K.A."/>
            <person name="Howland T.J."/>
            <person name="Wei M.-H."/>
            <person name="Ibegwam C."/>
            <person name="Jalali M."/>
            <person name="Kalush F."/>
            <person name="Karpen G.H."/>
            <person name="Ke Z."/>
            <person name="Kennison J.A."/>
            <person name="Ketchum K.A."/>
            <person name="Kimmel B.E."/>
            <person name="Kodira C.D."/>
            <person name="Kraft C.L."/>
            <person name="Kravitz S."/>
            <person name="Kulp D."/>
            <person name="Lai Z."/>
            <person name="Lasko P."/>
            <person name="Lei Y."/>
            <person name="Levitsky A.A."/>
            <person name="Li J.H."/>
            <person name="Li Z."/>
            <person name="Liang Y."/>
            <person name="Lin X."/>
            <person name="Liu X."/>
            <person name="Mattei B."/>
            <person name="McIntosh T.C."/>
            <person name="McLeod M.P."/>
            <person name="McPherson D."/>
            <person name="Merkulov G."/>
            <person name="Milshina N.V."/>
            <person name="Mobarry C."/>
            <person name="Morris J."/>
            <person name="Moshrefi A."/>
            <person name="Mount S.M."/>
            <person name="Moy M."/>
            <person name="Murphy B."/>
            <person name="Murphy L."/>
            <person name="Muzny D.M."/>
            <person name="Nelson D.L."/>
            <person name="Nelson D.R."/>
            <person name="Nelson K.A."/>
            <person name="Nixon K."/>
            <person name="Nusskern D.R."/>
            <person name="Pacleb J.M."/>
            <person name="Palazzolo M."/>
            <person name="Pittman G.S."/>
            <person name="Pan S."/>
            <person name="Pollard J."/>
            <person name="Puri V."/>
            <person name="Reese M.G."/>
            <person name="Reinert K."/>
            <person name="Remington K."/>
            <person name="Saunders R.D.C."/>
            <person name="Scheeler F."/>
            <person name="Shen H."/>
            <person name="Shue B.C."/>
            <person name="Siden-Kiamos I."/>
            <person name="Simpson M."/>
            <person name="Skupski M.P."/>
            <person name="Smith T.J."/>
            <person name="Spier E."/>
            <person name="Spradling A.C."/>
            <person name="Stapleton M."/>
            <person name="Strong R."/>
            <person name="Sun E."/>
            <person name="Svirskas R."/>
            <person name="Tector C."/>
            <person name="Turner R."/>
            <person name="Venter E."/>
            <person name="Wang A.H."/>
            <person name="Wang X."/>
            <person name="Wang Z.-Y."/>
            <person name="Wassarman D.A."/>
            <person name="Weinstock G.M."/>
            <person name="Weissenbach J."/>
            <person name="Williams S.M."/>
            <person name="Woodage T."/>
            <person name="Worley K.C."/>
            <person name="Wu D."/>
            <person name="Yang S."/>
            <person name="Yao Q.A."/>
            <person name="Ye J."/>
            <person name="Yeh R.-F."/>
            <person name="Zaveri J.S."/>
            <person name="Zhan M."/>
            <person name="Zhang G."/>
            <person name="Zhao Q."/>
            <person name="Zheng L."/>
            <person name="Zheng X.H."/>
            <person name="Zhong F.N."/>
            <person name="Zhong W."/>
            <person name="Zhou X."/>
            <person name="Zhu S.C."/>
            <person name="Zhu X."/>
            <person name="Smith H.O."/>
            <person name="Gibbs R.A."/>
            <person name="Myers E.W."/>
            <person name="Rubin G.M."/>
            <person name="Venter J.C."/>
        </authorList>
    </citation>
    <scope>NUCLEOTIDE SEQUENCE [LARGE SCALE GENOMIC DNA]</scope>
    <source>
        <strain>Berkeley</strain>
    </source>
</reference>
<reference key="3">
    <citation type="journal article" date="2002" name="Genome Biol.">
        <title>Annotation of the Drosophila melanogaster euchromatic genome: a systematic review.</title>
        <authorList>
            <person name="Misra S."/>
            <person name="Crosby M.A."/>
            <person name="Mungall C.J."/>
            <person name="Matthews B.B."/>
            <person name="Campbell K.S."/>
            <person name="Hradecky P."/>
            <person name="Huang Y."/>
            <person name="Kaminker J.S."/>
            <person name="Millburn G.H."/>
            <person name="Prochnik S.E."/>
            <person name="Smith C.D."/>
            <person name="Tupy J.L."/>
            <person name="Whitfield E.J."/>
            <person name="Bayraktaroglu L."/>
            <person name="Berman B.P."/>
            <person name="Bettencourt B.R."/>
            <person name="Celniker S.E."/>
            <person name="de Grey A.D.N.J."/>
            <person name="Drysdale R.A."/>
            <person name="Harris N.L."/>
            <person name="Richter J."/>
            <person name="Russo S."/>
            <person name="Schroeder A.J."/>
            <person name="Shu S.Q."/>
            <person name="Stapleton M."/>
            <person name="Yamada C."/>
            <person name="Ashburner M."/>
            <person name="Gelbart W.M."/>
            <person name="Rubin G.M."/>
            <person name="Lewis S.E."/>
        </authorList>
    </citation>
    <scope>GENOME REANNOTATION</scope>
    <source>
        <strain>Berkeley</strain>
    </source>
</reference>
<reference key="4">
    <citation type="journal article" date="1999" name="Neurosci. Lett.">
        <title>DmGluRA, a Drosophila metabotropic glutamate receptor, activates G-protein inwardly rectifying potassium channels in Xenopus oocytes.</title>
        <authorList>
            <person name="Raymond V."/>
            <person name="Hamon A."/>
            <person name="Grau Y."/>
            <person name="Lapied B."/>
        </authorList>
    </citation>
    <scope>FUNCTION</scope>
</reference>
<reference key="5">
    <citation type="journal article" date="2001" name="J. Comp. Neurol.">
        <title>Distribution of metabotropic glutamate receptor DmGlu-A in Drosophila melanogaster central nervous system.</title>
        <authorList>
            <person name="Ramaekers A."/>
            <person name="Parmentier M.L."/>
            <person name="Lasnier C."/>
            <person name="Bockaert J."/>
            <person name="Grau Y."/>
        </authorList>
    </citation>
    <scope>TISSUE SPECIFICITY</scope>
</reference>
<reference key="6">
    <citation type="journal article" date="2007" name="Glycobiology">
        <title>Identification of N-glycosylated proteins from the central nervous system of Drosophila melanogaster.</title>
        <authorList>
            <person name="Koles K."/>
            <person name="Lim J.-M."/>
            <person name="Aoki K."/>
            <person name="Porterfield M."/>
            <person name="Tiemeyer M."/>
            <person name="Wells L."/>
            <person name="Panin V."/>
        </authorList>
    </citation>
    <scope>GLYCOSYLATION [LARGE SCALE ANALYSIS] AT ASN-112</scope>
    <scope>IDENTIFICATION BY MASS SPECTROMETRY</scope>
    <source>
        <strain>Oregon-R</strain>
        <tissue>Head</tissue>
    </source>
</reference>
<dbReference type="EMBL" id="X99675">
    <property type="protein sequence ID" value="CAA67993.1"/>
    <property type="molecule type" value="mRNA"/>
</dbReference>
<dbReference type="EMBL" id="AE014135">
    <property type="protein sequence ID" value="AAF59402.1"/>
    <property type="molecule type" value="Genomic_DNA"/>
</dbReference>
<dbReference type="RefSeq" id="NP_001259076.1">
    <property type="nucleotide sequence ID" value="NM_001272147.1"/>
</dbReference>
<dbReference type="RefSeq" id="NP_524639.2">
    <property type="nucleotide sequence ID" value="NM_079900.3"/>
</dbReference>
<dbReference type="SMR" id="P91685"/>
<dbReference type="BioGRID" id="68663">
    <property type="interactions" value="7"/>
</dbReference>
<dbReference type="DIP" id="DIP-19294N"/>
<dbReference type="FunCoup" id="P91685">
    <property type="interactions" value="311"/>
</dbReference>
<dbReference type="IntAct" id="P91685">
    <property type="interactions" value="1"/>
</dbReference>
<dbReference type="STRING" id="7227.FBpp0305080"/>
<dbReference type="GlyCosmos" id="P91685">
    <property type="glycosylation" value="7 sites, No reported glycans"/>
</dbReference>
<dbReference type="GlyGen" id="P91685">
    <property type="glycosylation" value="7 sites"/>
</dbReference>
<dbReference type="iPTMnet" id="P91685"/>
<dbReference type="PaxDb" id="7227-FBpp0305080"/>
<dbReference type="DNASU" id="43838"/>
<dbReference type="EnsemblMetazoa" id="FBtr0089184">
    <property type="protein sequence ID" value="FBpp0088248"/>
    <property type="gene ID" value="FBgn0019985"/>
</dbReference>
<dbReference type="EnsemblMetazoa" id="FBtr0332858">
    <property type="protein sequence ID" value="FBpp0305080"/>
    <property type="gene ID" value="FBgn0019985"/>
</dbReference>
<dbReference type="GeneID" id="43838"/>
<dbReference type="KEGG" id="dme:Dmel_CG11144"/>
<dbReference type="AGR" id="FB:FBgn0019985"/>
<dbReference type="CTD" id="43838"/>
<dbReference type="FlyBase" id="FBgn0019985">
    <property type="gene designation" value="mGluR"/>
</dbReference>
<dbReference type="VEuPathDB" id="VectorBase:FBgn0019985"/>
<dbReference type="eggNOG" id="KOG1056">
    <property type="taxonomic scope" value="Eukaryota"/>
</dbReference>
<dbReference type="GeneTree" id="ENSGT01030000234595"/>
<dbReference type="HOGENOM" id="CLU_005389_0_0_1"/>
<dbReference type="InParanoid" id="P91685"/>
<dbReference type="OMA" id="CNIQDMS"/>
<dbReference type="OrthoDB" id="425344at2759"/>
<dbReference type="PhylomeDB" id="P91685"/>
<dbReference type="Reactome" id="R-DME-418594">
    <property type="pathway name" value="G alpha (i) signalling events"/>
</dbReference>
<dbReference type="Reactome" id="R-DME-420499">
    <property type="pathway name" value="Class C/3 (Metabotropic glutamate/pheromone receptors)"/>
</dbReference>
<dbReference type="BioGRID-ORCS" id="43838">
    <property type="hits" value="0 hits in 3 CRISPR screens"/>
</dbReference>
<dbReference type="GenomeRNAi" id="43838"/>
<dbReference type="PRO" id="PR:P91685"/>
<dbReference type="Proteomes" id="UP000000803">
    <property type="component" value="Chromosome 4"/>
</dbReference>
<dbReference type="Bgee" id="FBgn0019985">
    <property type="expression patterns" value="Expressed in medullary intrinsic neuron Mi1 (Drosophila) in insect head and 99 other cell types or tissues"/>
</dbReference>
<dbReference type="ExpressionAtlas" id="P91685">
    <property type="expression patterns" value="baseline and differential"/>
</dbReference>
<dbReference type="GO" id="GO:0038038">
    <property type="term" value="C:G protein-coupled receptor homodimeric complex"/>
    <property type="evidence" value="ECO:0000250"/>
    <property type="project" value="FlyBase"/>
</dbReference>
<dbReference type="GO" id="GO:0016020">
    <property type="term" value="C:membrane"/>
    <property type="evidence" value="ECO:0000250"/>
    <property type="project" value="FlyBase"/>
</dbReference>
<dbReference type="GO" id="GO:0045121">
    <property type="term" value="C:membrane raft"/>
    <property type="evidence" value="ECO:0000314"/>
    <property type="project" value="FlyBase"/>
</dbReference>
<dbReference type="GO" id="GO:0005886">
    <property type="term" value="C:plasma membrane"/>
    <property type="evidence" value="ECO:0000314"/>
    <property type="project" value="FlyBase"/>
</dbReference>
<dbReference type="GO" id="GO:0015485">
    <property type="term" value="F:cholesterol binding"/>
    <property type="evidence" value="ECO:0000314"/>
    <property type="project" value="FlyBase"/>
</dbReference>
<dbReference type="GO" id="GO:0004930">
    <property type="term" value="F:G protein-coupled receptor activity"/>
    <property type="evidence" value="ECO:0000250"/>
    <property type="project" value="FlyBase"/>
</dbReference>
<dbReference type="GO" id="GO:0016595">
    <property type="term" value="F:glutamate binding"/>
    <property type="evidence" value="ECO:0000314"/>
    <property type="project" value="FlyBase"/>
</dbReference>
<dbReference type="GO" id="GO:0008066">
    <property type="term" value="F:glutamate receptor activity"/>
    <property type="evidence" value="ECO:0000250"/>
    <property type="project" value="FlyBase"/>
</dbReference>
<dbReference type="GO" id="GO:0001641">
    <property type="term" value="F:group II metabotropic glutamate receptor activity"/>
    <property type="evidence" value="ECO:0000314"/>
    <property type="project" value="FlyBase"/>
</dbReference>
<dbReference type="GO" id="GO:0007216">
    <property type="term" value="P:G protein-coupled glutamate receptor signaling pathway"/>
    <property type="evidence" value="ECO:0000314"/>
    <property type="project" value="FlyBase"/>
</dbReference>
<dbReference type="GO" id="GO:0007612">
    <property type="term" value="P:learning"/>
    <property type="evidence" value="ECO:0000315"/>
    <property type="project" value="FlyBase"/>
</dbReference>
<dbReference type="GO" id="GO:0007616">
    <property type="term" value="P:long-term memory"/>
    <property type="evidence" value="ECO:0000315"/>
    <property type="project" value="FlyBase"/>
</dbReference>
<dbReference type="GO" id="GO:0008049">
    <property type="term" value="P:male courtship behavior"/>
    <property type="evidence" value="ECO:0000315"/>
    <property type="project" value="FlyBase"/>
</dbReference>
<dbReference type="GO" id="GO:0007528">
    <property type="term" value="P:neuromuscular junction development"/>
    <property type="evidence" value="ECO:0000315"/>
    <property type="project" value="FlyBase"/>
</dbReference>
<dbReference type="GO" id="GO:0051966">
    <property type="term" value="P:regulation of synaptic transmission, glutamatergic"/>
    <property type="evidence" value="ECO:0000315"/>
    <property type="project" value="FlyBase"/>
</dbReference>
<dbReference type="GO" id="GO:0007614">
    <property type="term" value="P:short-term memory"/>
    <property type="evidence" value="ECO:0000315"/>
    <property type="project" value="FlyBase"/>
</dbReference>
<dbReference type="GO" id="GO:0072553">
    <property type="term" value="P:terminal button organization"/>
    <property type="evidence" value="ECO:0000315"/>
    <property type="project" value="FlyBase"/>
</dbReference>
<dbReference type="CDD" id="cd15934">
    <property type="entry name" value="7tmC_mGluRs_group2_3"/>
    <property type="match status" value="1"/>
</dbReference>
<dbReference type="CDD" id="cd06375">
    <property type="entry name" value="PBP1_mGluR_groupII"/>
    <property type="match status" value="1"/>
</dbReference>
<dbReference type="FunFam" id="3.40.50.2300:FF:000308">
    <property type="entry name" value="Metabotropic glutamate receptor"/>
    <property type="match status" value="1"/>
</dbReference>
<dbReference type="FunFam" id="2.10.50.30:FF:000001">
    <property type="entry name" value="metabotropic glutamate receptor 1"/>
    <property type="match status" value="1"/>
</dbReference>
<dbReference type="Gene3D" id="3.40.50.2300">
    <property type="match status" value="2"/>
</dbReference>
<dbReference type="Gene3D" id="2.10.50.30">
    <property type="entry name" value="GPCR, family 3, nine cysteines domain"/>
    <property type="match status" value="1"/>
</dbReference>
<dbReference type="InterPro" id="IPR001828">
    <property type="entry name" value="ANF_lig-bd_rcpt"/>
</dbReference>
<dbReference type="InterPro" id="IPR000337">
    <property type="entry name" value="GPCR_3"/>
</dbReference>
<dbReference type="InterPro" id="IPR038550">
    <property type="entry name" value="GPCR_3_9-Cys_sf"/>
</dbReference>
<dbReference type="InterPro" id="IPR017978">
    <property type="entry name" value="GPCR_3_C"/>
</dbReference>
<dbReference type="InterPro" id="IPR017979">
    <property type="entry name" value="GPCR_3_CS"/>
</dbReference>
<dbReference type="InterPro" id="IPR000162">
    <property type="entry name" value="GPCR_3_mtglu_rcpt"/>
</dbReference>
<dbReference type="InterPro" id="IPR050726">
    <property type="entry name" value="mGluR"/>
</dbReference>
<dbReference type="InterPro" id="IPR028082">
    <property type="entry name" value="Peripla_BP_I"/>
</dbReference>
<dbReference type="PANTHER" id="PTHR24060">
    <property type="entry name" value="METABOTROPIC GLUTAMATE RECEPTOR"/>
    <property type="match status" value="1"/>
</dbReference>
<dbReference type="Pfam" id="PF00003">
    <property type="entry name" value="7tm_3"/>
    <property type="match status" value="1"/>
</dbReference>
<dbReference type="Pfam" id="PF01094">
    <property type="entry name" value="ANF_receptor"/>
    <property type="match status" value="1"/>
</dbReference>
<dbReference type="PRINTS" id="PR00248">
    <property type="entry name" value="GPCRMGR"/>
</dbReference>
<dbReference type="PRINTS" id="PR00593">
    <property type="entry name" value="MTABOTROPICR"/>
</dbReference>
<dbReference type="SUPFAM" id="SSF53822">
    <property type="entry name" value="Periplasmic binding protein-like I"/>
    <property type="match status" value="1"/>
</dbReference>
<dbReference type="PROSITE" id="PS00979">
    <property type="entry name" value="G_PROTEIN_RECEP_F3_1"/>
    <property type="match status" value="1"/>
</dbReference>
<dbReference type="PROSITE" id="PS00980">
    <property type="entry name" value="G_PROTEIN_RECEP_F3_2"/>
    <property type="match status" value="1"/>
</dbReference>
<dbReference type="PROSITE" id="PS00981">
    <property type="entry name" value="G_PROTEIN_RECEP_F3_3"/>
    <property type="match status" value="1"/>
</dbReference>
<dbReference type="PROSITE" id="PS50259">
    <property type="entry name" value="G_PROTEIN_RECEP_F3_4"/>
    <property type="match status" value="1"/>
</dbReference>
<keyword id="KW-1003">Cell membrane</keyword>
<keyword id="KW-0297">G-protein coupled receptor</keyword>
<keyword id="KW-0325">Glycoprotein</keyword>
<keyword id="KW-0472">Membrane</keyword>
<keyword id="KW-0675">Receptor</keyword>
<keyword id="KW-1185">Reference proteome</keyword>
<keyword id="KW-0732">Signal</keyword>
<keyword id="KW-0807">Transducer</keyword>
<keyword id="KW-0812">Transmembrane</keyword>
<keyword id="KW-1133">Transmembrane helix</keyword>
<gene>
    <name type="primary">mGluR</name>
    <name type="synonym">Glu-RA</name>
    <name type="synonym">GluRA</name>
    <name type="synonym">mGluRA</name>
    <name type="ORF">CG11144</name>
</gene>
<accession>P91685</accession>
<accession>Q9V485</accession>
<evidence type="ECO:0000250" key="1"/>
<evidence type="ECO:0000255" key="2"/>
<evidence type="ECO:0000256" key="3">
    <source>
        <dbReference type="SAM" id="MobiDB-lite"/>
    </source>
</evidence>
<evidence type="ECO:0000269" key="4">
    <source>
    </source>
</evidence>
<evidence type="ECO:0000269" key="5">
    <source>
    </source>
</evidence>
<evidence type="ECO:0000269" key="6">
    <source>
    </source>
</evidence>
<evidence type="ECO:0000269" key="7">
    <source>
    </source>
</evidence>
<evidence type="ECO:0000305" key="8"/>
<comment type="function">
    <text evidence="4 7">G-protein coupled receptor for glutamate. Ligand binding causes a conformation change that triggers signaling via guanine nucleotide-binding proteins (G proteins) and modulates the activity of down-stream effectors.</text>
</comment>
<comment type="subcellular location">
    <subcellularLocation>
        <location evidence="7">Cell membrane</location>
        <topology evidence="7">Multi-pass membrane protein</topology>
    </subcellularLocation>
</comment>
<comment type="tissue specificity">
    <text evidence="5">Expressed in the neurons of the larval CNS from the beginning of the first until the third instar. Expression in the third-instar larval CNS is restricted to a discrete number of somas and projections in the brain lobes and in the ventral ganglion. In the ventral nerve cord, expression is detected both in somas and projections. Expressed in the antennal lobes, the optic lobes, the central complex and the median bundle in the adult CNS.</text>
</comment>
<comment type="developmental stage">
    <text evidence="7">Expressed in the CNS of the late embryo.</text>
</comment>
<comment type="similarity">
    <text evidence="8">Belongs to the G-protein coupled receptor 3 family.</text>
</comment>
<name>GRM_DROME</name>
<feature type="signal peptide" evidence="2">
    <location>
        <begin position="1"/>
        <end position="25"/>
    </location>
</feature>
<feature type="chain" id="PRO_0000012944" description="Metabotropic glutamate receptor">
    <location>
        <begin position="26"/>
        <end position="976"/>
    </location>
</feature>
<feature type="topological domain" description="Extracellular" evidence="2">
    <location>
        <begin position="26"/>
        <end position="626"/>
    </location>
</feature>
<feature type="transmembrane region" description="Helical; Name=1" evidence="2">
    <location>
        <begin position="627"/>
        <end position="649"/>
    </location>
</feature>
<feature type="topological domain" description="Cytoplasmic" evidence="2">
    <location>
        <begin position="650"/>
        <end position="663"/>
    </location>
</feature>
<feature type="transmembrane region" description="Helical; Name=2" evidence="2">
    <location>
        <begin position="664"/>
        <end position="684"/>
    </location>
</feature>
<feature type="topological domain" description="Extracellular" evidence="2">
    <location>
        <begin position="685"/>
        <end position="695"/>
    </location>
</feature>
<feature type="transmembrane region" description="Helical; Name=3" evidence="2">
    <location>
        <begin position="696"/>
        <end position="714"/>
    </location>
</feature>
<feature type="topological domain" description="Cytoplasmic" evidence="2">
    <location>
        <begin position="715"/>
        <end position="738"/>
    </location>
</feature>
<feature type="transmembrane region" description="Helical; Name=4" evidence="2">
    <location>
        <begin position="739"/>
        <end position="759"/>
    </location>
</feature>
<feature type="topological domain" description="Extracellular" evidence="2">
    <location>
        <begin position="760"/>
        <end position="782"/>
    </location>
</feature>
<feature type="transmembrane region" description="Helical; Name=5" evidence="2">
    <location>
        <begin position="783"/>
        <end position="804"/>
    </location>
</feature>
<feature type="topological domain" description="Cytoplasmic" evidence="2">
    <location>
        <begin position="805"/>
        <end position="817"/>
    </location>
</feature>
<feature type="transmembrane region" description="Helical; Name=6" evidence="2">
    <location>
        <begin position="818"/>
        <end position="840"/>
    </location>
</feature>
<feature type="topological domain" description="Extracellular" evidence="2">
    <location>
        <begin position="841"/>
        <end position="850"/>
    </location>
</feature>
<feature type="transmembrane region" description="Helical; Name=7" evidence="2">
    <location>
        <begin position="851"/>
        <end position="876"/>
    </location>
</feature>
<feature type="topological domain" description="Cytoplasmic" evidence="2">
    <location>
        <begin position="877"/>
        <end position="976"/>
    </location>
</feature>
<feature type="region of interest" description="Disordered" evidence="3">
    <location>
        <begin position="920"/>
        <end position="946"/>
    </location>
</feature>
<feature type="compositionally biased region" description="Polar residues" evidence="3">
    <location>
        <begin position="927"/>
        <end position="946"/>
    </location>
</feature>
<feature type="binding site" evidence="1">
    <location>
        <position position="158"/>
    </location>
    <ligand>
        <name>L-glutamate</name>
        <dbReference type="ChEBI" id="CHEBI:29985"/>
    </ligand>
</feature>
<feature type="binding site" evidence="1">
    <location>
        <begin position="179"/>
        <end position="181"/>
    </location>
    <ligand>
        <name>L-glutamate</name>
        <dbReference type="ChEBI" id="CHEBI:29985"/>
    </ligand>
</feature>
<feature type="binding site" evidence="1">
    <location>
        <position position="229"/>
    </location>
    <ligand>
        <name>L-glutamate</name>
        <dbReference type="ChEBI" id="CHEBI:29985"/>
    </ligand>
</feature>
<feature type="binding site" evidence="1">
    <location>
        <position position="310"/>
    </location>
    <ligand>
        <name>L-glutamate</name>
        <dbReference type="ChEBI" id="CHEBI:29985"/>
    </ligand>
</feature>
<feature type="binding site" evidence="1">
    <location>
        <position position="417"/>
    </location>
    <ligand>
        <name>L-glutamate</name>
        <dbReference type="ChEBI" id="CHEBI:29985"/>
    </ligand>
</feature>
<feature type="glycosylation site" description="N-linked (GlcNAc...) asparagine" evidence="6">
    <location>
        <position position="112"/>
    </location>
</feature>
<feature type="glycosylation site" description="N-linked (GlcNAc...) asparagine" evidence="2">
    <location>
        <position position="143"/>
    </location>
</feature>
<feature type="glycosylation site" description="N-linked (GlcNAc...) asparagine" evidence="2">
    <location>
        <position position="216"/>
    </location>
</feature>
<feature type="glycosylation site" description="N-linked (GlcNAc...) asparagine" evidence="2">
    <location>
        <position position="299"/>
    </location>
</feature>
<feature type="glycosylation site" description="N-linked (GlcNAc...) asparagine" evidence="2">
    <location>
        <position position="386"/>
    </location>
</feature>
<feature type="glycosylation site" description="N-linked (GlcNAc...) asparagine" evidence="2">
    <location>
        <position position="491"/>
    </location>
</feature>
<feature type="glycosylation site" description="N-linked (GlcNAc...) asparagine" evidence="2">
    <location>
        <position position="524"/>
    </location>
</feature>
<feature type="sequence conflict" description="In Ref. 1; CAA67993." evidence="8" ref="1">
    <original>V</original>
    <variation>A</variation>
    <location>
        <position position="834"/>
    </location>
</feature>
<organism>
    <name type="scientific">Drosophila melanogaster</name>
    <name type="common">Fruit fly</name>
    <dbReference type="NCBI Taxonomy" id="7227"/>
    <lineage>
        <taxon>Eukaryota</taxon>
        <taxon>Metazoa</taxon>
        <taxon>Ecdysozoa</taxon>
        <taxon>Arthropoda</taxon>
        <taxon>Hexapoda</taxon>
        <taxon>Insecta</taxon>
        <taxon>Pterygota</taxon>
        <taxon>Neoptera</taxon>
        <taxon>Endopterygota</taxon>
        <taxon>Diptera</taxon>
        <taxon>Brachycera</taxon>
        <taxon>Muscomorpha</taxon>
        <taxon>Ephydroidea</taxon>
        <taxon>Drosophilidae</taxon>
        <taxon>Drosophila</taxon>
        <taxon>Sophophora</taxon>
    </lineage>
</organism>
<proteinExistence type="evidence at protein level"/>
<sequence length="976" mass="108486">MKQKNNNGTILVVVMVLSWSRVVDLKSPSNTHTQDSVSVSLPGDIILGGLFPVHEKGEGAPCGPKVYNRGVQRLEAMLYAIDRVNNDPNILPGITIGVHILDTCSRDTYALNQSLQFVRASLNNLDTSGYECADGSSPQLRKNASSGPVFGVIGGSYSSVSLQVANLLRLFHIPQVSPASTAKTLSDKTRFDLFARTVPPDTFQSVALVDILKNFNWSYVSTIHSEGSYGEYGIEALHKEATERNVCIAVAEKVPSAADDKVFDSIISKLQKKPNARGVVLFTRAEDARRILQAAKRANLSQPFHWIASDGWGKQQKLLEGLEDIAEGAITVELQSEIIADFDRYMMQLTPETNQRNPWFAEYWEDTFNCVLTSLSVKPDTSNSANSTDNKIGVKAKTECDDSYRLSEKVGYEQESKTQFVVDAVYAFAYALHNLHNDRCNTQSDQTTETRKHLQSESVWYRKISTDTKSQACPDMANYDGKEFYNNYLLNVSFIDLAGSEVKFDRQGDGLARYDILNYQRQENSSGYQYKVIGKWFNGLQLNSETVVWNKETEQPTSACSLPCEVGMIKKQQGDTCCWICDSCESFEYVYDEFTCKDCGPGLWPYADKLSCYALDIQYMKWNSLFALIPMAIAIFGIALTSIVIVLFAKNHDTPLVRASGRELSYTLLFGILVCYCNTFALIAKPTIGSCVLQRFGIGVGFSIIYSALLTKTNRISRIFHSASKSAQRLKYISPQSQVVITTSLIAIQVLITMIWMVVEPPGTRFYYPDRREVILKCKIQDMSFLFSQLYNMILITICTIYAIKTRKIPENFNESKFIGFTMYTTCIIWLAFVPIYFGTGNSYEVQTTTLCISISLSASVALVCLYSPKVYILVFHPDKNVRKLTMNSTVYRRSAAAVAQGAPTSSGYSRTHAPGTSALTGGAVGTNASSSTLPTQNSPHLDEASAQTNVAHKTNGEFLPEVGERVEPICHIVNK</sequence>
<protein>
    <recommendedName>
        <fullName>Metabotropic glutamate receptor</fullName>
        <shortName>DmGluRA</shortName>
    </recommendedName>
</protein>